<protein>
    <recommendedName>
        <fullName evidence="1">NAD(P)H-quinone oxidoreductase subunit H, chloroplastic</fullName>
        <ecNumber evidence="1">7.1.1.-</ecNumber>
    </recommendedName>
    <alternativeName>
        <fullName>NAD(P)H dehydrogenase subunit H</fullName>
    </alternativeName>
    <alternativeName>
        <fullName evidence="1">NADH-plastoquinone oxidoreductase 49 kDa subunit</fullName>
    </alternativeName>
    <alternativeName>
        <fullName evidence="1">NADH-plastoquinone oxidoreductase subunit H</fullName>
    </alternativeName>
</protein>
<feature type="chain" id="PRO_0000357985" description="NAD(P)H-quinone oxidoreductase subunit H, chloroplastic">
    <location>
        <begin position="1"/>
        <end position="395"/>
    </location>
</feature>
<sequence>MTVPDTRKGLMIVNMGPHHPSMHGVLRLIVTLEGEDVIDCEPILGYLHRGMEKIAENRTIIQYLPYVTRWDYLATMFTEAITVNAPEQLGNVQVPQRASYIRVIMLELSRIASHLLWLGPFMADIGAQTPFFYIFRERELLYDLFEASTGMRMMHNYFRIGGVAADLPHGWIDKCLDFCDYFLTRVAEYEKLITRNPIFLDRVEGVGIIGGEEAINWGLSGPMLRASGIPWDLRKVDHYECYNEFDWEVQWQKEGDSLARYLVRIGEMTESIKIIQQAIEGIPGGPYENLEVRRFDFDGATNSEWNDLEYGFISKKPSPNFELSKQELYMRVEAPKGELGIYMIGDNSVFPWRWKIRPPGFINLQILPQLVKRMKLADIMTILGSIDIIMGEVDR</sequence>
<comment type="function">
    <text evidence="1">NDH shuttles electrons from NAD(P)H:plastoquinone, via FMN and iron-sulfur (Fe-S) centers, to quinones in the photosynthetic chain and possibly in a chloroplast respiratory chain. The immediate electron acceptor for the enzyme in this species is believed to be plastoquinone. Couples the redox reaction to proton translocation, and thus conserves the redox energy in a proton gradient.</text>
</comment>
<comment type="catalytic activity">
    <reaction evidence="1">
        <text>a plastoquinone + NADH + (n+1) H(+)(in) = a plastoquinol + NAD(+) + n H(+)(out)</text>
        <dbReference type="Rhea" id="RHEA:42608"/>
        <dbReference type="Rhea" id="RHEA-COMP:9561"/>
        <dbReference type="Rhea" id="RHEA-COMP:9562"/>
        <dbReference type="ChEBI" id="CHEBI:15378"/>
        <dbReference type="ChEBI" id="CHEBI:17757"/>
        <dbReference type="ChEBI" id="CHEBI:57540"/>
        <dbReference type="ChEBI" id="CHEBI:57945"/>
        <dbReference type="ChEBI" id="CHEBI:62192"/>
    </reaction>
</comment>
<comment type="catalytic activity">
    <reaction evidence="1">
        <text>a plastoquinone + NADPH + (n+1) H(+)(in) = a plastoquinol + NADP(+) + n H(+)(out)</text>
        <dbReference type="Rhea" id="RHEA:42612"/>
        <dbReference type="Rhea" id="RHEA-COMP:9561"/>
        <dbReference type="Rhea" id="RHEA-COMP:9562"/>
        <dbReference type="ChEBI" id="CHEBI:15378"/>
        <dbReference type="ChEBI" id="CHEBI:17757"/>
        <dbReference type="ChEBI" id="CHEBI:57783"/>
        <dbReference type="ChEBI" id="CHEBI:58349"/>
        <dbReference type="ChEBI" id="CHEBI:62192"/>
    </reaction>
</comment>
<comment type="subunit">
    <text evidence="1">NDH is composed of at least 16 different subunits, 5 of which are encoded in the nucleus.</text>
</comment>
<comment type="subcellular location">
    <subcellularLocation>
        <location evidence="1">Plastid</location>
        <location evidence="1">Chloroplast thylakoid membrane</location>
        <topology evidence="1">Peripheral membrane protein</topology>
        <orientation evidence="1">Stromal side</orientation>
    </subcellularLocation>
</comment>
<comment type="similarity">
    <text evidence="1">Belongs to the complex I 49 kDa subunit family.</text>
</comment>
<name>NDHH_DIOEL</name>
<keyword id="KW-0150">Chloroplast</keyword>
<keyword id="KW-0472">Membrane</keyword>
<keyword id="KW-0520">NAD</keyword>
<keyword id="KW-0521">NADP</keyword>
<keyword id="KW-0934">Plastid</keyword>
<keyword id="KW-0618">Plastoquinone</keyword>
<keyword id="KW-0874">Quinone</keyword>
<keyword id="KW-0793">Thylakoid</keyword>
<keyword id="KW-1278">Translocase</keyword>
<keyword id="KW-0813">Transport</keyword>
<dbReference type="EC" id="7.1.1.-" evidence="1"/>
<dbReference type="EMBL" id="EF380353">
    <property type="protein sequence ID" value="ABR01479.1"/>
    <property type="molecule type" value="Genomic_DNA"/>
</dbReference>
<dbReference type="RefSeq" id="YP_001294402.1">
    <property type="nucleotide sequence ID" value="NC_009601.1"/>
</dbReference>
<dbReference type="SMR" id="A6MMQ7"/>
<dbReference type="GeneID" id="5236632"/>
<dbReference type="GO" id="GO:0009535">
    <property type="term" value="C:chloroplast thylakoid membrane"/>
    <property type="evidence" value="ECO:0007669"/>
    <property type="project" value="UniProtKB-SubCell"/>
</dbReference>
<dbReference type="GO" id="GO:0051287">
    <property type="term" value="F:NAD binding"/>
    <property type="evidence" value="ECO:0007669"/>
    <property type="project" value="InterPro"/>
</dbReference>
<dbReference type="GO" id="GO:0016655">
    <property type="term" value="F:oxidoreductase activity, acting on NAD(P)H, quinone or similar compound as acceptor"/>
    <property type="evidence" value="ECO:0007669"/>
    <property type="project" value="UniProtKB-UniRule"/>
</dbReference>
<dbReference type="GO" id="GO:0048038">
    <property type="term" value="F:quinone binding"/>
    <property type="evidence" value="ECO:0007669"/>
    <property type="project" value="UniProtKB-KW"/>
</dbReference>
<dbReference type="GO" id="GO:0019684">
    <property type="term" value="P:photosynthesis, light reaction"/>
    <property type="evidence" value="ECO:0007669"/>
    <property type="project" value="UniProtKB-UniRule"/>
</dbReference>
<dbReference type="Gene3D" id="1.10.645.10">
    <property type="entry name" value="Cytochrome-c3 Hydrogenase, chain B"/>
    <property type="match status" value="1"/>
</dbReference>
<dbReference type="HAMAP" id="MF_01358">
    <property type="entry name" value="NDH1_NuoD"/>
    <property type="match status" value="1"/>
</dbReference>
<dbReference type="InterPro" id="IPR001135">
    <property type="entry name" value="NADH_Q_OxRdtase_suD"/>
</dbReference>
<dbReference type="InterPro" id="IPR014029">
    <property type="entry name" value="NADH_UbQ_OxRdtase_49kDa_CS"/>
</dbReference>
<dbReference type="InterPro" id="IPR022885">
    <property type="entry name" value="NDH1_su_D/H"/>
</dbReference>
<dbReference type="InterPro" id="IPR029014">
    <property type="entry name" value="NiFe-Hase_large"/>
</dbReference>
<dbReference type="NCBIfam" id="NF004739">
    <property type="entry name" value="PRK06075.1"/>
    <property type="match status" value="1"/>
</dbReference>
<dbReference type="NCBIfam" id="NF005649">
    <property type="entry name" value="PRK07415.1"/>
    <property type="match status" value="1"/>
</dbReference>
<dbReference type="PANTHER" id="PTHR11993:SF10">
    <property type="entry name" value="NADH DEHYDROGENASE [UBIQUINONE] IRON-SULFUR PROTEIN 2, MITOCHONDRIAL"/>
    <property type="match status" value="1"/>
</dbReference>
<dbReference type="PANTHER" id="PTHR11993">
    <property type="entry name" value="NADH-UBIQUINONE OXIDOREDUCTASE 49 KDA SUBUNIT"/>
    <property type="match status" value="1"/>
</dbReference>
<dbReference type="Pfam" id="PF00346">
    <property type="entry name" value="Complex1_49kDa"/>
    <property type="match status" value="1"/>
</dbReference>
<dbReference type="SUPFAM" id="SSF56762">
    <property type="entry name" value="HydB/Nqo4-like"/>
    <property type="match status" value="1"/>
</dbReference>
<dbReference type="PROSITE" id="PS00535">
    <property type="entry name" value="COMPLEX1_49K"/>
    <property type="match status" value="1"/>
</dbReference>
<proteinExistence type="inferred from homology"/>
<evidence type="ECO:0000255" key="1">
    <source>
        <dbReference type="HAMAP-Rule" id="MF_01358"/>
    </source>
</evidence>
<accession>A6MMQ7</accession>
<geneLocation type="chloroplast"/>
<organism>
    <name type="scientific">Dioscorea elephantipes</name>
    <name type="common">Elephant's foot yam</name>
    <name type="synonym">Testudinaria elephantipes</name>
    <dbReference type="NCBI Taxonomy" id="145284"/>
    <lineage>
        <taxon>Eukaryota</taxon>
        <taxon>Viridiplantae</taxon>
        <taxon>Streptophyta</taxon>
        <taxon>Embryophyta</taxon>
        <taxon>Tracheophyta</taxon>
        <taxon>Spermatophyta</taxon>
        <taxon>Magnoliopsida</taxon>
        <taxon>Liliopsida</taxon>
        <taxon>Dioscoreales</taxon>
        <taxon>Dioscoreaceae</taxon>
        <taxon>Dioscorea</taxon>
    </lineage>
</organism>
<gene>
    <name evidence="1" type="primary">ndhH</name>
</gene>
<reference key="1">
    <citation type="journal article" date="2007" name="Mol. Phylogenet. Evol.">
        <title>Phylogenetic and evolutionary implications of complete chloroplast genome sequences of four early-diverging angiosperms: Buxus (Buxaceae), Chloranthus (Chloranthaceae), Dioscorea (Dioscoreaceae), and Illicium (Schisandraceae).</title>
        <authorList>
            <person name="Hansen D.R."/>
            <person name="Dastidar S.G."/>
            <person name="Cai Z."/>
            <person name="Penaflor C."/>
            <person name="Kuehl J.V."/>
            <person name="Boore J.L."/>
            <person name="Jansen R.K."/>
        </authorList>
    </citation>
    <scope>NUCLEOTIDE SEQUENCE [LARGE SCALE GENOMIC DNA]</scope>
</reference>